<proteinExistence type="inferred from homology"/>
<reference key="1">
    <citation type="journal article" date="2009" name="Vaccine">
        <title>Whole genome sequence analysis of Mycobacterium bovis bacillus Calmette-Guerin (BCG) Tokyo 172: a comparative study of BCG vaccine substrains.</title>
        <authorList>
            <person name="Seki M."/>
            <person name="Honda I."/>
            <person name="Fujita I."/>
            <person name="Yano I."/>
            <person name="Yamamoto S."/>
            <person name="Koyama A."/>
        </authorList>
    </citation>
    <scope>NUCLEOTIDE SEQUENCE [LARGE SCALE GENOMIC DNA]</scope>
    <source>
        <strain>BCG / Tokyo 172 / ATCC 35737 / TMC 1019</strain>
    </source>
</reference>
<evidence type="ECO:0000255" key="1">
    <source>
        <dbReference type="HAMAP-Rule" id="MF_01306"/>
    </source>
</evidence>
<evidence type="ECO:0000305" key="2"/>
<organism>
    <name type="scientific">Mycobacterium bovis (strain BCG / Tokyo 172 / ATCC 35737 / TMC 1019)</name>
    <dbReference type="NCBI Taxonomy" id="561275"/>
    <lineage>
        <taxon>Bacteria</taxon>
        <taxon>Bacillati</taxon>
        <taxon>Actinomycetota</taxon>
        <taxon>Actinomycetes</taxon>
        <taxon>Mycobacteriales</taxon>
        <taxon>Mycobacteriaceae</taxon>
        <taxon>Mycobacterium</taxon>
        <taxon>Mycobacterium tuberculosis complex</taxon>
    </lineage>
</organism>
<comment type="function">
    <text evidence="1">One of the primary rRNA binding proteins, it binds directly to 16S rRNA where it nucleates assembly of the body of the 30S subunit.</text>
</comment>
<comment type="function">
    <text evidence="1">With S5 and S12 plays an important role in translational accuracy.</text>
</comment>
<comment type="subunit">
    <text evidence="1">Part of the 30S ribosomal subunit. Contacts protein S5. The interaction surface between S4 and S5 is involved in control of translational fidelity.</text>
</comment>
<comment type="similarity">
    <text evidence="1">Belongs to the universal ribosomal protein uS4 family.</text>
</comment>
<accession>C1AHR6</accession>
<gene>
    <name evidence="1" type="primary">rpsD</name>
    <name type="ordered locus">JTY_3523</name>
</gene>
<keyword id="KW-0687">Ribonucleoprotein</keyword>
<keyword id="KW-0689">Ribosomal protein</keyword>
<keyword id="KW-0694">RNA-binding</keyword>
<keyword id="KW-0699">rRNA-binding</keyword>
<feature type="chain" id="PRO_1000165414" description="Small ribosomal subunit protein uS4">
    <location>
        <begin position="1"/>
        <end position="201"/>
    </location>
</feature>
<feature type="domain" description="S4 RNA-binding" evidence="1">
    <location>
        <begin position="91"/>
        <end position="157"/>
    </location>
</feature>
<dbReference type="EMBL" id="AP010918">
    <property type="protein sequence ID" value="BAH27795.1"/>
    <property type="molecule type" value="Genomic_DNA"/>
</dbReference>
<dbReference type="RefSeq" id="WP_003418354.1">
    <property type="nucleotide sequence ID" value="NZ_CP014566.1"/>
</dbReference>
<dbReference type="SMR" id="C1AHR6"/>
<dbReference type="GeneID" id="45427447"/>
<dbReference type="KEGG" id="mbt:JTY_3523"/>
<dbReference type="HOGENOM" id="CLU_092403_0_2_11"/>
<dbReference type="GO" id="GO:0015935">
    <property type="term" value="C:small ribosomal subunit"/>
    <property type="evidence" value="ECO:0007669"/>
    <property type="project" value="InterPro"/>
</dbReference>
<dbReference type="GO" id="GO:0019843">
    <property type="term" value="F:rRNA binding"/>
    <property type="evidence" value="ECO:0007669"/>
    <property type="project" value="UniProtKB-UniRule"/>
</dbReference>
<dbReference type="GO" id="GO:0003735">
    <property type="term" value="F:structural constituent of ribosome"/>
    <property type="evidence" value="ECO:0007669"/>
    <property type="project" value="InterPro"/>
</dbReference>
<dbReference type="GO" id="GO:0042274">
    <property type="term" value="P:ribosomal small subunit biogenesis"/>
    <property type="evidence" value="ECO:0007669"/>
    <property type="project" value="TreeGrafter"/>
</dbReference>
<dbReference type="GO" id="GO:0006412">
    <property type="term" value="P:translation"/>
    <property type="evidence" value="ECO:0007669"/>
    <property type="project" value="UniProtKB-UniRule"/>
</dbReference>
<dbReference type="CDD" id="cd00165">
    <property type="entry name" value="S4"/>
    <property type="match status" value="1"/>
</dbReference>
<dbReference type="FunFam" id="3.10.290.10:FF:000001">
    <property type="entry name" value="30S ribosomal protein S4"/>
    <property type="match status" value="1"/>
</dbReference>
<dbReference type="Gene3D" id="1.10.1050.10">
    <property type="entry name" value="Ribosomal Protein S4 Delta 41, Chain A, domain 1"/>
    <property type="match status" value="1"/>
</dbReference>
<dbReference type="Gene3D" id="3.10.290.10">
    <property type="entry name" value="RNA-binding S4 domain"/>
    <property type="match status" value="1"/>
</dbReference>
<dbReference type="HAMAP" id="MF_01306_B">
    <property type="entry name" value="Ribosomal_uS4_B"/>
    <property type="match status" value="1"/>
</dbReference>
<dbReference type="InterPro" id="IPR022801">
    <property type="entry name" value="Ribosomal_uS4"/>
</dbReference>
<dbReference type="InterPro" id="IPR005709">
    <property type="entry name" value="Ribosomal_uS4_bac-type"/>
</dbReference>
<dbReference type="InterPro" id="IPR018079">
    <property type="entry name" value="Ribosomal_uS4_CS"/>
</dbReference>
<dbReference type="InterPro" id="IPR001912">
    <property type="entry name" value="Ribosomal_uS4_N"/>
</dbReference>
<dbReference type="InterPro" id="IPR002942">
    <property type="entry name" value="S4_RNA-bd"/>
</dbReference>
<dbReference type="InterPro" id="IPR036986">
    <property type="entry name" value="S4_RNA-bd_sf"/>
</dbReference>
<dbReference type="NCBIfam" id="NF003717">
    <property type="entry name" value="PRK05327.1"/>
    <property type="match status" value="1"/>
</dbReference>
<dbReference type="NCBIfam" id="TIGR01017">
    <property type="entry name" value="rpsD_bact"/>
    <property type="match status" value="1"/>
</dbReference>
<dbReference type="PANTHER" id="PTHR11831">
    <property type="entry name" value="30S 40S RIBOSOMAL PROTEIN"/>
    <property type="match status" value="1"/>
</dbReference>
<dbReference type="PANTHER" id="PTHR11831:SF4">
    <property type="entry name" value="SMALL RIBOSOMAL SUBUNIT PROTEIN US4M"/>
    <property type="match status" value="1"/>
</dbReference>
<dbReference type="Pfam" id="PF00163">
    <property type="entry name" value="Ribosomal_S4"/>
    <property type="match status" value="1"/>
</dbReference>
<dbReference type="Pfam" id="PF01479">
    <property type="entry name" value="S4"/>
    <property type="match status" value="1"/>
</dbReference>
<dbReference type="SMART" id="SM01390">
    <property type="entry name" value="Ribosomal_S4"/>
    <property type="match status" value="1"/>
</dbReference>
<dbReference type="SMART" id="SM00363">
    <property type="entry name" value="S4"/>
    <property type="match status" value="1"/>
</dbReference>
<dbReference type="SUPFAM" id="SSF55174">
    <property type="entry name" value="Alpha-L RNA-binding motif"/>
    <property type="match status" value="1"/>
</dbReference>
<dbReference type="PROSITE" id="PS00632">
    <property type="entry name" value="RIBOSOMAL_S4"/>
    <property type="match status" value="1"/>
</dbReference>
<dbReference type="PROSITE" id="PS50889">
    <property type="entry name" value="S4"/>
    <property type="match status" value="1"/>
</dbReference>
<sequence length="201" mass="23476">MARYTGPVTRKSRRLRTDLVGGDQAFEKRPYPPGQHGRARIKESEYLLQLQEKQKARFTYGVMEKQFRRYYEEAVRQPGKTGEELLKILESRLDNVIYRAGLARTRRMARQLVSHGHFNVNGVHVNVPSYRVSQYDIVDVRDKSLNTVPFQIARETAGERPIPSWLQVVGERQRVLIHQLPERAQIDVPLTEQLIVEYYSK</sequence>
<name>RS4_MYCBT</name>
<protein>
    <recommendedName>
        <fullName evidence="1">Small ribosomal subunit protein uS4</fullName>
    </recommendedName>
    <alternativeName>
        <fullName evidence="2">30S ribosomal protein S4</fullName>
    </alternativeName>
</protein>